<keyword id="KW-0067">ATP-binding</keyword>
<keyword id="KW-0150">Chloroplast</keyword>
<keyword id="KW-1015">Disulfide bond</keyword>
<keyword id="KW-0317">Glutathione biosynthesis</keyword>
<keyword id="KW-0436">Ligase</keyword>
<keyword id="KW-0547">Nucleotide-binding</keyword>
<keyword id="KW-0934">Plastid</keyword>
<keyword id="KW-1185">Reference proteome</keyword>
<keyword id="KW-0809">Transit peptide</keyword>
<dbReference type="EC" id="6.3.2.2"/>
<dbReference type="EMBL" id="DQ444219">
    <property type="protein sequence ID" value="ABD98695.2"/>
    <property type="molecule type" value="mRNA"/>
</dbReference>
<dbReference type="RefSeq" id="NP_001312610.1">
    <property type="nucleotide sequence ID" value="NM_001325681.1"/>
</dbReference>
<dbReference type="RefSeq" id="XP_016478566.1">
    <property type="nucleotide sequence ID" value="XM_016623080.1"/>
</dbReference>
<dbReference type="SMR" id="Q1W2L8"/>
<dbReference type="STRING" id="4097.Q1W2L8"/>
<dbReference type="PaxDb" id="4097-Q1W2L8"/>
<dbReference type="ProMEX" id="Q1W2L8"/>
<dbReference type="GeneID" id="107799938"/>
<dbReference type="KEGG" id="nta:107799938"/>
<dbReference type="OMA" id="VESWETH"/>
<dbReference type="OrthoDB" id="2012853at2759"/>
<dbReference type="BRENDA" id="6.3.2.2">
    <property type="organism ID" value="3645"/>
</dbReference>
<dbReference type="UniPathway" id="UPA00142">
    <property type="reaction ID" value="UER00209"/>
</dbReference>
<dbReference type="Proteomes" id="UP000084051">
    <property type="component" value="Unplaced"/>
</dbReference>
<dbReference type="GO" id="GO:0009507">
    <property type="term" value="C:chloroplast"/>
    <property type="evidence" value="ECO:0007669"/>
    <property type="project" value="UniProtKB-SubCell"/>
</dbReference>
<dbReference type="GO" id="GO:0005524">
    <property type="term" value="F:ATP binding"/>
    <property type="evidence" value="ECO:0007669"/>
    <property type="project" value="UniProtKB-KW"/>
</dbReference>
<dbReference type="GO" id="GO:0004357">
    <property type="term" value="F:glutamate-cysteine ligase activity"/>
    <property type="evidence" value="ECO:0007669"/>
    <property type="project" value="UniProtKB-EC"/>
</dbReference>
<dbReference type="GO" id="GO:0006750">
    <property type="term" value="P:glutathione biosynthetic process"/>
    <property type="evidence" value="ECO:0007669"/>
    <property type="project" value="UniProtKB-UniPathway"/>
</dbReference>
<dbReference type="FunFam" id="3.30.590.20:FF:000003">
    <property type="entry name" value="Glutamate--cysteine ligase"/>
    <property type="match status" value="1"/>
</dbReference>
<dbReference type="Gene3D" id="3.30.590.20">
    <property type="match status" value="1"/>
</dbReference>
<dbReference type="InterPro" id="IPR035434">
    <property type="entry name" value="GCL_bact_plant"/>
</dbReference>
<dbReference type="InterPro" id="IPR006336">
    <property type="entry name" value="GCS2"/>
</dbReference>
<dbReference type="InterPro" id="IPR014746">
    <property type="entry name" value="Gln_synth/guanido_kin_cat_dom"/>
</dbReference>
<dbReference type="InterPro" id="IPR011556">
    <property type="entry name" value="Glut_cys_lig_pln_type"/>
</dbReference>
<dbReference type="NCBIfam" id="TIGR01436">
    <property type="entry name" value="glu_cys_lig_pln"/>
    <property type="match status" value="1"/>
</dbReference>
<dbReference type="PANTHER" id="PTHR34378">
    <property type="entry name" value="GLUTAMATE--CYSTEINE LIGASE, CHLOROPLASTIC"/>
    <property type="match status" value="1"/>
</dbReference>
<dbReference type="PANTHER" id="PTHR34378:SF1">
    <property type="entry name" value="GLUTAMATE--CYSTEINE LIGASE, CHLOROPLASTIC"/>
    <property type="match status" value="1"/>
</dbReference>
<dbReference type="Pfam" id="PF04107">
    <property type="entry name" value="GCS2"/>
    <property type="match status" value="1"/>
</dbReference>
<dbReference type="PIRSF" id="PIRSF017901">
    <property type="entry name" value="GCL"/>
    <property type="match status" value="1"/>
</dbReference>
<dbReference type="SUPFAM" id="SSF55931">
    <property type="entry name" value="Glutamine synthetase/guanido kinase"/>
    <property type="match status" value="1"/>
</dbReference>
<sequence>MALMSQAGSSHCIYSEKMKCISGHSSITSNMEMLKMKDICFGNISSRNSSKPMQGIYLDRVGVERRRGRLAIVAASPPTEDAVVAAEPLTKEDLVAYLASGCKSKEKWRIGTEHEKFGFEFGTLRPMKYEQIAELLNGIAERFDWEKVMEGDNIIGLKQGKQSISLEPGGQFELSGAPLETLHQTCAEVNSHLYQVKAVAEEMGIGFLGTGFQPKWGLKDIPVMPKGRYEIMRNYMPKVGSLGLDMMFRTCTVQVNLDFSSEADMIRKFRAGLALQPIATALFANSPFTEGKPNGYLSMRSHIWTDTDNNRAGMLPFVFDDSFGFEQYVDYALDVPMYFVYRKKKYIDCAGMSFRDFMNGKLSPIPGDYPTLNDWENHLTTIFPEVRLKRYLEMRGADGGPWRRLCALPAFWVGILYDEVSLQTVLDMTSDWTAEEREMLRNKVPTSGLKTPFRDGLLKHVAQDVVKLAKEGLERRGYKETGFLNEVTEVVRTGVTPAEKLLELYHGKWGRSVDPVFEELLY</sequence>
<protein>
    <recommendedName>
        <fullName>Glutamate--cysteine ligase, chloroplastic</fullName>
        <ecNumber>6.3.2.2</ecNumber>
    </recommendedName>
    <alternativeName>
        <fullName>Gamma-ECS</fullName>
        <shortName>GCS</shortName>
    </alternativeName>
    <alternativeName>
        <fullName>Gamma-glutamylcysteine synthetase</fullName>
    </alternativeName>
</protein>
<gene>
    <name type="primary">GSH1</name>
</gene>
<proteinExistence type="evidence at transcript level"/>
<evidence type="ECO:0000250" key="1"/>
<evidence type="ECO:0000255" key="2"/>
<evidence type="ECO:0000305" key="3"/>
<comment type="catalytic activity">
    <reaction>
        <text>L-cysteine + L-glutamate + ATP = gamma-L-glutamyl-L-cysteine + ADP + phosphate + H(+)</text>
        <dbReference type="Rhea" id="RHEA:13285"/>
        <dbReference type="ChEBI" id="CHEBI:15378"/>
        <dbReference type="ChEBI" id="CHEBI:29985"/>
        <dbReference type="ChEBI" id="CHEBI:30616"/>
        <dbReference type="ChEBI" id="CHEBI:35235"/>
        <dbReference type="ChEBI" id="CHEBI:43474"/>
        <dbReference type="ChEBI" id="CHEBI:58173"/>
        <dbReference type="ChEBI" id="CHEBI:456216"/>
        <dbReference type="EC" id="6.3.2.2"/>
    </reaction>
</comment>
<comment type="pathway">
    <text>Sulfur metabolism; glutathione biosynthesis; glutathione from L-cysteine and L-glutamate: step 1/2.</text>
</comment>
<comment type="subunit">
    <text evidence="1">Homodimer or monomer when oxidized or reduced, respectively.</text>
</comment>
<comment type="subcellular location">
    <subcellularLocation>
        <location evidence="1">Plastid</location>
        <location evidence="1">Chloroplast</location>
    </subcellularLocation>
</comment>
<comment type="PTM">
    <text evidence="1">The Cys-186-Cys-406 disulfide bridge is known to modulate the enzyme activity according to the redox status. The oxidized form constitutes the active enzyme (By similarity).</text>
</comment>
<comment type="similarity">
    <text evidence="3">Belongs to the carboxylate-amine ligase family. Glutamate--cysteine ligase type 2 subfamily.</text>
</comment>
<reference key="1">
    <citation type="submission" date="2006-08" db="EMBL/GenBank/DDBJ databases">
        <title>Regulation of plant and bacterial gamma-glutamylcysteine synthetase.</title>
        <authorList>
            <person name="Gromes R."/>
            <person name="Rausch T."/>
        </authorList>
    </citation>
    <scope>NUCLEOTIDE SEQUENCE [MRNA]</scope>
</reference>
<feature type="transit peptide" description="Chloroplast" evidence="2">
    <location>
        <begin position="1"/>
        <end position="45"/>
    </location>
</feature>
<feature type="chain" id="PRO_0000333025" description="Glutamate--cysteine ligase, chloroplastic">
    <location>
        <begin position="46"/>
        <end position="522"/>
    </location>
</feature>
<feature type="disulfide bond" evidence="1">
    <location>
        <begin position="186"/>
        <end position="406"/>
    </location>
</feature>
<accession>Q1W2L8</accession>
<name>GSH1_TOBAC</name>
<organism>
    <name type="scientific">Nicotiana tabacum</name>
    <name type="common">Common tobacco</name>
    <dbReference type="NCBI Taxonomy" id="4097"/>
    <lineage>
        <taxon>Eukaryota</taxon>
        <taxon>Viridiplantae</taxon>
        <taxon>Streptophyta</taxon>
        <taxon>Embryophyta</taxon>
        <taxon>Tracheophyta</taxon>
        <taxon>Spermatophyta</taxon>
        <taxon>Magnoliopsida</taxon>
        <taxon>eudicotyledons</taxon>
        <taxon>Gunneridae</taxon>
        <taxon>Pentapetalae</taxon>
        <taxon>asterids</taxon>
        <taxon>lamiids</taxon>
        <taxon>Solanales</taxon>
        <taxon>Solanaceae</taxon>
        <taxon>Nicotianoideae</taxon>
        <taxon>Nicotianeae</taxon>
        <taxon>Nicotiana</taxon>
    </lineage>
</organism>